<evidence type="ECO:0000250" key="1">
    <source>
        <dbReference type="UniProtKB" id="M1EBB2"/>
    </source>
</evidence>
<evidence type="ECO:0000256" key="2">
    <source>
        <dbReference type="SAM" id="MobiDB-lite"/>
    </source>
</evidence>
<evidence type="ECO:0000269" key="3">
    <source>
    </source>
</evidence>
<evidence type="ECO:0000305" key="4"/>
<sequence length="260" mass="25291">MAIVGVPGWIGESAVNETGQRWMDAAMREVRVSVPGWMSSMAGQSKEIHYSIGASNSYNKDTLINWIKAQGSTPVVITITGNIVSQSTGVPCLDFPSSLTNAYVTLIINSGVTVYGRGGNGGSNAAGAAGGNAINNGIGTRLRITNNGAIAGGGGGGGGGNRGKLIFGGGGGRPFGAGGSSSHMSSGATAGTISAPGKGSVGEGSLSAYTGGAGGNVGAAGGRCNTQGNGTEYNGGAAGKAVTGNAPTWTKVGTIYGSRV</sequence>
<comment type="function">
    <text evidence="3">Receptor binding protein (RBP) that is at the tip of the long tail fibers and serves as the phage recognition site for the attachment host receptor OmpA.</text>
</comment>
<comment type="subcellular location">
    <subcellularLocation>
        <location evidence="1">Virion</location>
    </subcellularLocation>
    <text evidence="1">Forms the distal tip of the long tail fiber.</text>
</comment>
<comment type="domain">
    <text evidence="1">The N-terminus is involved in binding to the fiber protein p37. The C-terminus contains glycine-rich motifs (GRM) and mediates the host specificity. The glycine-rich motifs assemble into a 3-layered PG(II) sandwich domain.</text>
</comment>
<comment type="miscellaneous">
    <text>This phage use outer membrane protein ompA as a receptor.</text>
</comment>
<comment type="similarity">
    <text evidence="4">Belongs to the receptor-recognizing protein gp38 family.</text>
</comment>
<protein>
    <recommendedName>
        <fullName evidence="1">Receptor-recognizing protein gp38</fullName>
    </recommendedName>
    <alternativeName>
        <fullName>Gene product 38</fullName>
        <shortName evidence="1">gp38</shortName>
    </alternativeName>
    <alternativeName>
        <fullName evidence="1">Long tail fiber adhesin</fullName>
    </alternativeName>
</protein>
<organismHost>
    <name type="scientific">Escherichia coli</name>
    <dbReference type="NCBI Taxonomy" id="562"/>
</organismHost>
<name>RBP_BPK3</name>
<keyword id="KW-0945">Host-virus interaction</keyword>
<keyword id="KW-1161">Viral attachment to host cell</keyword>
<keyword id="KW-1230">Viral tail fiber protein</keyword>
<keyword id="KW-1227">Viral tail protein</keyword>
<keyword id="KW-0946">Virion</keyword>
<keyword id="KW-1160">Virus entry into host cell</keyword>
<dbReference type="EMBL" id="X05560">
    <property type="protein sequence ID" value="CAA29074.1"/>
    <property type="molecule type" value="Genomic_DNA"/>
</dbReference>
<dbReference type="PIR" id="S00276">
    <property type="entry name" value="S00276"/>
</dbReference>
<dbReference type="SMR" id="P07876"/>
<dbReference type="GO" id="GO:0098024">
    <property type="term" value="C:virus tail, fiber"/>
    <property type="evidence" value="ECO:0007669"/>
    <property type="project" value="UniProtKB-KW"/>
</dbReference>
<dbReference type="GO" id="GO:0098671">
    <property type="term" value="P:adhesion receptor-mediated virion attachment to host cell"/>
    <property type="evidence" value="ECO:0000314"/>
    <property type="project" value="UniProtKB"/>
</dbReference>
<dbReference type="GO" id="GO:0046718">
    <property type="term" value="P:symbiont entry into host cell"/>
    <property type="evidence" value="ECO:0007669"/>
    <property type="project" value="UniProtKB-KW"/>
</dbReference>
<dbReference type="InterPro" id="IPR048291">
    <property type="entry name" value="Gp38_N"/>
</dbReference>
<dbReference type="InterPro" id="IPR007932">
    <property type="entry name" value="Receptor-recog_Gp38"/>
</dbReference>
<dbReference type="Pfam" id="PF05268">
    <property type="entry name" value="GP38"/>
    <property type="match status" value="1"/>
</dbReference>
<dbReference type="Pfam" id="PF21721">
    <property type="entry name" value="Gp38_N"/>
    <property type="match status" value="1"/>
</dbReference>
<organism>
    <name type="scientific">Enterobacteria phage K3</name>
    <name type="common">Bacteriophage K3</name>
    <dbReference type="NCBI Taxonomy" id="10674"/>
    <lineage>
        <taxon>Viruses</taxon>
        <taxon>Duplodnaviria</taxon>
        <taxon>Heunggongvirae</taxon>
        <taxon>Uroviricota</taxon>
        <taxon>Caudoviricetes</taxon>
        <taxon>Straboviridae</taxon>
        <taxon>Tevenvirinae</taxon>
        <taxon>Tequatrovirus</taxon>
    </lineage>
</organism>
<reference key="1">
    <citation type="journal article" date="1987" name="J. Mol. Biol.">
        <title>DNA sequence of genes 38 encoding a receptor-recognizing protein of bacteriophages T2, K3 and of K3 host range mutants.</title>
        <authorList>
            <person name="Riede I."/>
            <person name="Drexler K."/>
            <person name="Eschbach M.L."/>
            <person name="Henning U."/>
        </authorList>
    </citation>
    <scope>NUCLEOTIDE SEQUENCE [GENOMIC DNA]</scope>
    <scope>FUNCTION</scope>
</reference>
<proteinExistence type="inferred from homology"/>
<gene>
    <name type="primary">38</name>
</gene>
<accession>P07876</accession>
<feature type="chain" id="PRO_0000165033" description="Receptor-recognizing protein gp38">
    <location>
        <begin position="1"/>
        <end position="260"/>
    </location>
</feature>
<feature type="region of interest" description="Disordered" evidence="2">
    <location>
        <begin position="176"/>
        <end position="197"/>
    </location>
</feature>
<feature type="short sequence motif" description="GRM 1" evidence="1">
    <location>
        <begin position="116"/>
        <end position="123"/>
    </location>
</feature>
<feature type="short sequence motif" description="GRM 2" evidence="1">
    <location>
        <begin position="125"/>
        <end position="132"/>
    </location>
</feature>
<feature type="short sequence motif" description="GRM 3" evidence="1">
    <location>
        <begin position="152"/>
        <end position="160"/>
    </location>
</feature>
<feature type="short sequence motif" description="GRM 4" evidence="1">
    <location>
        <begin position="162"/>
        <end position="173"/>
    </location>
</feature>
<feature type="short sequence motif" description="GRM 5" evidence="1">
    <location>
        <begin position="176"/>
        <end position="182"/>
    </location>
</feature>
<feature type="short sequence motif" description="GRM 6" evidence="1">
    <location>
        <begin position="185"/>
        <end position="191"/>
    </location>
</feature>
<feature type="short sequence motif" description="GRM 7" evidence="1">
    <location>
        <begin position="194"/>
        <end position="204"/>
    </location>
</feature>
<feature type="short sequence motif" description="GRM 8" evidence="1">
    <location>
        <begin position="210"/>
        <end position="216"/>
    </location>
</feature>
<feature type="short sequence motif" description="GRM 9" evidence="1">
    <location>
        <begin position="219"/>
        <end position="224"/>
    </location>
</feature>
<feature type="short sequence motif" description="GRM 10" evidence="1">
    <location>
        <begin position="228"/>
        <end position="240"/>
    </location>
</feature>
<feature type="compositionally biased region" description="Low complexity" evidence="2">
    <location>
        <begin position="180"/>
        <end position="191"/>
    </location>
</feature>
<feature type="site" description="Interaction with the fiber protein p37" evidence="1">
    <location>
        <position position="9"/>
    </location>
</feature>
<feature type="site" description="Interaction with the fiber protein p37" evidence="1">
    <location>
        <position position="22"/>
    </location>
</feature>
<feature type="site" description="Interaction with the fiber protein p37" evidence="1">
    <location>
        <position position="37"/>
    </location>
</feature>